<proteinExistence type="evidence at protein level"/>
<comment type="function">
    <text evidence="1">Carbamate kinase that plays a biosynthetic role in that it produces carbamoyl-phosphate.</text>
</comment>
<comment type="catalytic activity">
    <reaction>
        <text>hydrogencarbonate + NH4(+) + ATP = carbamoyl phosphate + ADP + H2O + H(+)</text>
        <dbReference type="Rhea" id="RHEA:10152"/>
        <dbReference type="ChEBI" id="CHEBI:15377"/>
        <dbReference type="ChEBI" id="CHEBI:15378"/>
        <dbReference type="ChEBI" id="CHEBI:17544"/>
        <dbReference type="ChEBI" id="CHEBI:28938"/>
        <dbReference type="ChEBI" id="CHEBI:30616"/>
        <dbReference type="ChEBI" id="CHEBI:58228"/>
        <dbReference type="ChEBI" id="CHEBI:456216"/>
        <dbReference type="EC" id="2.7.2.2"/>
    </reaction>
</comment>
<comment type="biophysicochemical properties">
    <temperatureDependence>
        <text>50% activity is retained after 1 hour at 100 degrees Celsius or 3 hours at 95 degrees Celsius.</text>
    </temperatureDependence>
</comment>
<comment type="subunit">
    <text>Homodimer.</text>
</comment>
<comment type="subcellular location">
    <subcellularLocation>
        <location>Cytoplasm</location>
    </subcellularLocation>
</comment>
<comment type="similarity">
    <text evidence="2">Belongs to the carbamate kinase family.</text>
</comment>
<name>CPKA_PYRFU</name>
<evidence type="ECO:0000269" key="1">
    <source>
    </source>
</evidence>
<evidence type="ECO:0000305" key="2"/>
<evidence type="ECO:0007829" key="3">
    <source>
        <dbReference type="PDB" id="1E19"/>
    </source>
</evidence>
<feature type="chain" id="PRO_0000185149" description="Carbamate kinase">
    <location>
        <begin position="1"/>
        <end position="314"/>
    </location>
</feature>
<feature type="strand" evidence="3">
    <location>
        <begin position="4"/>
        <end position="8"/>
    </location>
</feature>
<feature type="helix" evidence="3">
    <location>
        <begin position="11"/>
        <end position="13"/>
    </location>
</feature>
<feature type="helix" evidence="3">
    <location>
        <begin position="23"/>
        <end position="42"/>
    </location>
</feature>
<feature type="strand" evidence="3">
    <location>
        <begin position="46"/>
        <end position="50"/>
    </location>
</feature>
<feature type="helix" evidence="3">
    <location>
        <begin position="54"/>
        <end position="71"/>
    </location>
</feature>
<feature type="helix" evidence="3">
    <location>
        <begin position="78"/>
        <end position="103"/>
    </location>
</feature>
<feature type="strand" evidence="3">
    <location>
        <begin position="110"/>
        <end position="113"/>
    </location>
</feature>
<feature type="strand" evidence="3">
    <location>
        <begin position="116"/>
        <end position="119"/>
    </location>
</feature>
<feature type="helix" evidence="3">
    <location>
        <begin position="124"/>
        <end position="126"/>
    </location>
</feature>
<feature type="strand" evidence="3">
    <location>
        <begin position="131"/>
        <end position="137"/>
    </location>
</feature>
<feature type="helix" evidence="3">
    <location>
        <begin position="139"/>
        <end position="149"/>
    </location>
</feature>
<feature type="strand" evidence="3">
    <location>
        <begin position="152"/>
        <end position="155"/>
    </location>
</feature>
<feature type="strand" evidence="3">
    <location>
        <begin position="161"/>
        <end position="165"/>
    </location>
</feature>
<feature type="strand" evidence="3">
    <location>
        <begin position="170"/>
        <end position="173"/>
    </location>
</feature>
<feature type="helix" evidence="3">
    <location>
        <begin position="176"/>
        <end position="184"/>
    </location>
</feature>
<feature type="strand" evidence="3">
    <location>
        <begin position="188"/>
        <end position="190"/>
    </location>
</feature>
<feature type="helix" evidence="3">
    <location>
        <begin position="193"/>
        <end position="195"/>
    </location>
</feature>
<feature type="strand" evidence="3">
    <location>
        <begin position="197"/>
        <end position="202"/>
    </location>
</feature>
<feature type="strand" evidence="3">
    <location>
        <begin position="205"/>
        <end position="208"/>
    </location>
</feature>
<feature type="helix" evidence="3">
    <location>
        <begin position="215"/>
        <end position="225"/>
    </location>
</feature>
<feature type="strand" evidence="3">
    <location>
        <begin position="229"/>
        <end position="239"/>
    </location>
</feature>
<feature type="turn" evidence="3">
    <location>
        <begin position="243"/>
        <end position="245"/>
    </location>
</feature>
<feature type="strand" evidence="3">
    <location>
        <begin position="254"/>
        <end position="256"/>
    </location>
</feature>
<feature type="helix" evidence="3">
    <location>
        <begin position="257"/>
        <end position="265"/>
    </location>
</feature>
<feature type="turn" evidence="3">
    <location>
        <begin position="271"/>
        <end position="273"/>
    </location>
</feature>
<feature type="helix" evidence="3">
    <location>
        <begin position="274"/>
        <end position="287"/>
    </location>
</feature>
<feature type="strand" evidence="3">
    <location>
        <begin position="290"/>
        <end position="296"/>
    </location>
</feature>
<feature type="helix" evidence="3">
    <location>
        <begin position="297"/>
        <end position="299"/>
    </location>
</feature>
<feature type="helix" evidence="3">
    <location>
        <begin position="300"/>
        <end position="304"/>
    </location>
</feature>
<feature type="strand" evidence="3">
    <location>
        <begin position="307"/>
        <end position="313"/>
    </location>
</feature>
<reference key="1">
    <citation type="journal article" date="1997" name="Proc. Natl. Acad. Sci. U.S.A.">
        <title>The carbamate kinase-like carbamoyl phosphate synthetase of the hyperthermophilic archaeon Pyrococcus furiosus, a missing link in the evolution of carbamoyl phosphate biosynthesis.</title>
        <authorList>
            <person name="Durbecq V."/>
            <person name="Legrain C."/>
            <person name="Roovers M."/>
            <person name="Pierard A."/>
            <person name="Glansdorff N."/>
        </authorList>
    </citation>
    <scope>NUCLEOTIDE SEQUENCE [GENOMIC DNA]</scope>
    <source>
        <strain>ATCC 43587 / DSM 3638 / JCM 8422 / Vc1</strain>
    </source>
</reference>
<reference key="2">
    <citation type="submission" date="1998-07" db="EMBL/GenBank/DDBJ databases">
        <title>Pfu helicase locus.</title>
        <authorList>
            <person name="Kanai A."/>
            <person name="Oida H."/>
            <person name="Yabe T."/>
            <person name="Hihara S."/>
            <person name="Doi H."/>
        </authorList>
    </citation>
    <scope>NUCLEOTIDE SEQUENCE [GENOMIC DNA]</scope>
    <source>
        <strain>ATCC 43587 / DSM 3638 / JCM 8422 / Vc1</strain>
    </source>
</reference>
<reference key="3">
    <citation type="journal article" date="1999" name="Genetics">
        <title>Divergence of the hyperthermophilic archaea Pyrococcus furiosus and P. horikoshii inferred from complete genomic sequences.</title>
        <authorList>
            <person name="Maeder D.L."/>
            <person name="Weiss R.B."/>
            <person name="Dunn D.M."/>
            <person name="Cherry J.L."/>
            <person name="Gonzalez J.M."/>
            <person name="DiRuggiero J."/>
            <person name="Robb F.T."/>
        </authorList>
    </citation>
    <scope>NUCLEOTIDE SEQUENCE [LARGE SCALE GENOMIC DNA]</scope>
    <source>
        <strain>ATCC 43587 / DSM 3638 / JCM 8422 / Vc1</strain>
    </source>
</reference>
<reference key="4">
    <citation type="journal article" date="2000" name="J. Mol. Biol.">
        <title>The 1.5-A resolution crystal structure of the carbamate kinase-like carbamoyl phosphate synthetase from the hyperthermophilic Archaeon Pyrococcus furiosus, bound to ADP, confirms that this thermostable enzyme is a carbamate kinase, and provides insight into substrate binding and stability in carbamate kinases.</title>
        <authorList>
            <person name="Ramon-Maiques S."/>
            <person name="Marina A."/>
            <person name="Uriarte M."/>
            <person name="Fita I."/>
            <person name="Rubio V."/>
        </authorList>
    </citation>
    <scope>X-RAY CRYSTALLOGRAPHY (1.5 ANGSTROMS)</scope>
    <scope>FUNCTION</scope>
    <source>
        <strain>ATCC 43587 / DSM 3638 / JCM 8422 / Vc1</strain>
    </source>
</reference>
<dbReference type="EC" id="2.7.2.2"/>
<dbReference type="EMBL" id="Y09829">
    <property type="protein sequence ID" value="CAA70972.1"/>
    <property type="molecule type" value="Genomic_DNA"/>
</dbReference>
<dbReference type="EMBL" id="AB016521">
    <property type="protein sequence ID" value="BAA32017.1"/>
    <property type="molecule type" value="Genomic_DNA"/>
</dbReference>
<dbReference type="EMBL" id="AE009950">
    <property type="protein sequence ID" value="AAL80800.1"/>
    <property type="molecule type" value="Genomic_DNA"/>
</dbReference>
<dbReference type="PIR" id="T43855">
    <property type="entry name" value="T43855"/>
</dbReference>
<dbReference type="PDB" id="1E19">
    <property type="method" value="X-ray"/>
    <property type="resolution" value="1.50 A"/>
    <property type="chains" value="A/B=1-314"/>
</dbReference>
<dbReference type="PDBsum" id="1E19"/>
<dbReference type="SMR" id="P95474"/>
<dbReference type="STRING" id="186497.PF0676"/>
<dbReference type="PaxDb" id="186497-PF0676"/>
<dbReference type="KEGG" id="pfu:PF0676"/>
<dbReference type="PATRIC" id="fig|186497.12.peg.712"/>
<dbReference type="eggNOG" id="arCOG00863">
    <property type="taxonomic scope" value="Archaea"/>
</dbReference>
<dbReference type="HOGENOM" id="CLU_076278_0_0_2"/>
<dbReference type="OrthoDB" id="31128at2157"/>
<dbReference type="PhylomeDB" id="P95474"/>
<dbReference type="BRENDA" id="2.7.2.2">
    <property type="organism ID" value="5243"/>
</dbReference>
<dbReference type="EvolutionaryTrace" id="P95474"/>
<dbReference type="Proteomes" id="UP000001013">
    <property type="component" value="Chromosome"/>
</dbReference>
<dbReference type="GO" id="GO:0005829">
    <property type="term" value="C:cytosol"/>
    <property type="evidence" value="ECO:0007669"/>
    <property type="project" value="TreeGrafter"/>
</dbReference>
<dbReference type="GO" id="GO:0005524">
    <property type="term" value="F:ATP binding"/>
    <property type="evidence" value="ECO:0007669"/>
    <property type="project" value="UniProtKB-KW"/>
</dbReference>
<dbReference type="GO" id="GO:0008804">
    <property type="term" value="F:carbamate kinase activity"/>
    <property type="evidence" value="ECO:0007669"/>
    <property type="project" value="UniProtKB-EC"/>
</dbReference>
<dbReference type="GO" id="GO:0019546">
    <property type="term" value="P:arginine deiminase pathway"/>
    <property type="evidence" value="ECO:0007669"/>
    <property type="project" value="TreeGrafter"/>
</dbReference>
<dbReference type="CDD" id="cd04235">
    <property type="entry name" value="AAK_CK"/>
    <property type="match status" value="1"/>
</dbReference>
<dbReference type="FunFam" id="3.40.1160.10:FF:000007">
    <property type="entry name" value="Carbamate kinase"/>
    <property type="match status" value="1"/>
</dbReference>
<dbReference type="Gene3D" id="3.40.1160.10">
    <property type="entry name" value="Acetylglutamate kinase-like"/>
    <property type="match status" value="1"/>
</dbReference>
<dbReference type="InterPro" id="IPR036393">
    <property type="entry name" value="AceGlu_kinase-like_sf"/>
</dbReference>
<dbReference type="InterPro" id="IPR001048">
    <property type="entry name" value="Asp/Glu/Uridylate_kinase"/>
</dbReference>
<dbReference type="InterPro" id="IPR003964">
    <property type="entry name" value="Carb_kinase"/>
</dbReference>
<dbReference type="NCBIfam" id="TIGR00746">
    <property type="entry name" value="arcC"/>
    <property type="match status" value="1"/>
</dbReference>
<dbReference type="NCBIfam" id="NF009007">
    <property type="entry name" value="PRK12352.1"/>
    <property type="match status" value="1"/>
</dbReference>
<dbReference type="NCBIfam" id="NF009008">
    <property type="entry name" value="PRK12354.1"/>
    <property type="match status" value="1"/>
</dbReference>
<dbReference type="PANTHER" id="PTHR30409">
    <property type="entry name" value="CARBAMATE KINASE"/>
    <property type="match status" value="1"/>
</dbReference>
<dbReference type="PANTHER" id="PTHR30409:SF1">
    <property type="entry name" value="CARBAMATE KINASE-RELATED"/>
    <property type="match status" value="1"/>
</dbReference>
<dbReference type="Pfam" id="PF00696">
    <property type="entry name" value="AA_kinase"/>
    <property type="match status" value="1"/>
</dbReference>
<dbReference type="PIRSF" id="PIRSF000723">
    <property type="entry name" value="Carbamate_kin"/>
    <property type="match status" value="1"/>
</dbReference>
<dbReference type="PRINTS" id="PR01469">
    <property type="entry name" value="CARBMTKINASE"/>
</dbReference>
<dbReference type="SUPFAM" id="SSF53633">
    <property type="entry name" value="Carbamate kinase-like"/>
    <property type="match status" value="1"/>
</dbReference>
<organism>
    <name type="scientific">Pyrococcus furiosus (strain ATCC 43587 / DSM 3638 / JCM 8422 / Vc1)</name>
    <dbReference type="NCBI Taxonomy" id="186497"/>
    <lineage>
        <taxon>Archaea</taxon>
        <taxon>Methanobacteriati</taxon>
        <taxon>Methanobacteriota</taxon>
        <taxon>Thermococci</taxon>
        <taxon>Thermococcales</taxon>
        <taxon>Thermococcaceae</taxon>
        <taxon>Pyrococcus</taxon>
    </lineage>
</organism>
<gene>
    <name type="primary">cpkA</name>
    <name type="synonym">cpa</name>
    <name type="ordered locus">PF0676</name>
</gene>
<sequence>MGKRVVIALGGNALQQRGQKGSYEEMMDNVRKTARQIAEIIARGYEVVITHGNGPQVGSLLLHMDAGQATYGIPAQPMDVAGAMSQGWIGYMIQQALKNELRKRGMEKKVVTIITQTIVDKNDPAFQNPTKPVGPFYDEETAKRLAREKGWIVKEDSGRGWRRVVPSPDPKGHVEAETIKKLVERGVIVIASGGGGVPVILEDGEIKGVEAVIDKDLAGEKLAEEVNADIFMILTDVNGAALYYGTEKEQWLREVKVEELRKYYEEGHFKAGSMGPKVLAAIRFIEWGGERAIIAHLEKAVEALEGKTGTQVLP</sequence>
<keyword id="KW-0002">3D-structure</keyword>
<keyword id="KW-0067">ATP-binding</keyword>
<keyword id="KW-0963">Cytoplasm</keyword>
<keyword id="KW-0418">Kinase</keyword>
<keyword id="KW-0547">Nucleotide-binding</keyword>
<keyword id="KW-1185">Reference proteome</keyword>
<keyword id="KW-0808">Transferase</keyword>
<accession>P95474</accession>
<protein>
    <recommendedName>
        <fullName>Carbamate kinase</fullName>
        <ecNumber>2.7.2.2</ecNumber>
    </recommendedName>
    <alternativeName>
        <fullName>Carbamate kinase-like carbamoylphosphate synthase</fullName>
    </alternativeName>
</protein>